<name>HNS_SALTI</name>
<sequence length="137" mass="15543">MSEALKILNNIRTLRAQARECTLETLEEMLEKLEVVVNERREEESAAAAEVEERTRKLQQYREMLIADGIDPNELLNSMAAAKSGTKAKRAARPAKYSYVDENGETKTWTGQGRTPAVIKKAMEEQGKQLEDFLIKE</sequence>
<protein>
    <recommendedName>
        <fullName>DNA-binding protein H-NS</fullName>
    </recommendedName>
    <alternativeName>
        <fullName>Histone-like protein HLP-II</fullName>
    </alternativeName>
    <alternativeName>
        <fullName>Protein B1</fullName>
    </alternativeName>
    <alternativeName>
        <fullName>Protein H1</fullName>
    </alternativeName>
</protein>
<reference key="1">
    <citation type="journal article" date="2001" name="Nature">
        <title>Complete genome sequence of a multiple drug resistant Salmonella enterica serovar Typhi CT18.</title>
        <authorList>
            <person name="Parkhill J."/>
            <person name="Dougan G."/>
            <person name="James K.D."/>
            <person name="Thomson N.R."/>
            <person name="Pickard D."/>
            <person name="Wain J."/>
            <person name="Churcher C.M."/>
            <person name="Mungall K.L."/>
            <person name="Bentley S.D."/>
            <person name="Holden M.T.G."/>
            <person name="Sebaihia M."/>
            <person name="Baker S."/>
            <person name="Basham D."/>
            <person name="Brooks K."/>
            <person name="Chillingworth T."/>
            <person name="Connerton P."/>
            <person name="Cronin A."/>
            <person name="Davis P."/>
            <person name="Davies R.M."/>
            <person name="Dowd L."/>
            <person name="White N."/>
            <person name="Farrar J."/>
            <person name="Feltwell T."/>
            <person name="Hamlin N."/>
            <person name="Haque A."/>
            <person name="Hien T.T."/>
            <person name="Holroyd S."/>
            <person name="Jagels K."/>
            <person name="Krogh A."/>
            <person name="Larsen T.S."/>
            <person name="Leather S."/>
            <person name="Moule S."/>
            <person name="O'Gaora P."/>
            <person name="Parry C."/>
            <person name="Quail M.A."/>
            <person name="Rutherford K.M."/>
            <person name="Simmonds M."/>
            <person name="Skelton J."/>
            <person name="Stevens K."/>
            <person name="Whitehead S."/>
            <person name="Barrell B.G."/>
        </authorList>
    </citation>
    <scope>NUCLEOTIDE SEQUENCE [LARGE SCALE GENOMIC DNA]</scope>
    <source>
        <strain>CT18</strain>
    </source>
</reference>
<reference key="2">
    <citation type="journal article" date="2003" name="J. Bacteriol.">
        <title>Comparative genomics of Salmonella enterica serovar Typhi strains Ty2 and CT18.</title>
        <authorList>
            <person name="Deng W."/>
            <person name="Liou S.-R."/>
            <person name="Plunkett G. III"/>
            <person name="Mayhew G.F."/>
            <person name="Rose D.J."/>
            <person name="Burland V."/>
            <person name="Kodoyianni V."/>
            <person name="Schwartz D.C."/>
            <person name="Blattner F.R."/>
        </authorList>
    </citation>
    <scope>NUCLEOTIDE SEQUENCE [LARGE SCALE GENOMIC DNA]</scope>
    <source>
        <strain>ATCC 700931 / Ty2</strain>
    </source>
</reference>
<keyword id="KW-0963">Cytoplasm</keyword>
<keyword id="KW-0238">DNA-binding</keyword>
<keyword id="KW-0678">Repressor</keyword>
<keyword id="KW-0804">Transcription</keyword>
<keyword id="KW-0805">Transcription regulation</keyword>
<feature type="initiator methionine" description="Removed" evidence="1">
    <location>
        <position position="1"/>
    </location>
</feature>
<feature type="chain" id="PRO_0000168509" description="DNA-binding protein H-NS">
    <location>
        <begin position="2"/>
        <end position="137"/>
    </location>
</feature>
<feature type="DNA-binding region" evidence="2">
    <location>
        <begin position="112"/>
        <end position="117"/>
    </location>
</feature>
<feature type="site" description="Interacts with Hha" evidence="1">
    <location>
        <position position="12"/>
    </location>
</feature>
<organism>
    <name type="scientific">Salmonella typhi</name>
    <dbReference type="NCBI Taxonomy" id="90370"/>
    <lineage>
        <taxon>Bacteria</taxon>
        <taxon>Pseudomonadati</taxon>
        <taxon>Pseudomonadota</taxon>
        <taxon>Gammaproteobacteria</taxon>
        <taxon>Enterobacterales</taxon>
        <taxon>Enterobacteriaceae</taxon>
        <taxon>Salmonella</taxon>
    </lineage>
</organism>
<gene>
    <name type="primary">hns</name>
    <name type="synonym">hnsA</name>
    <name type="synonym">osmZ</name>
    <name type="ordered locus">STY1299</name>
    <name type="ordered locus">t1662</name>
</gene>
<evidence type="ECO:0000250" key="1"/>
<evidence type="ECO:0000250" key="2">
    <source>
        <dbReference type="UniProtKB" id="P0A1S2"/>
    </source>
</evidence>
<evidence type="ECO:0000250" key="3">
    <source>
        <dbReference type="UniProtKB" id="P0ACF8"/>
    </source>
</evidence>
<evidence type="ECO:0000305" key="4"/>
<comment type="function">
    <text evidence="3">A DNA-binding protein implicated in transcriptional repression and chromosome organization and compaction. Binds nucleation sites in AT-rich DNA and bridges them, forming higher-order nucleoprotein complexes and condensing the chromosome. As many horizontally transferred genes are AT-rich, it plays a central role in silencing foreign genes. A subset of genes are repressed by H-NS in association with other proteins (By similarity).</text>
</comment>
<comment type="subunit">
    <text evidence="3">Homodimer that oligomerizes on DNA into higher-order complexes that form bridges between disparate regions of DNA compacting it. Interacts with Hha, YdgT and StpA.</text>
</comment>
<comment type="subcellular location">
    <subcellularLocation>
        <location evidence="3">Cytoplasm</location>
        <location evidence="3">Nucleoid</location>
    </subcellularLocation>
</comment>
<comment type="similarity">
    <text evidence="4">Belongs to the histone-like protein H-NS family.</text>
</comment>
<proteinExistence type="inferred from homology"/>
<dbReference type="EMBL" id="AL513382">
    <property type="protein sequence ID" value="CAD08382.1"/>
    <property type="molecule type" value="Genomic_DNA"/>
</dbReference>
<dbReference type="EMBL" id="AE014613">
    <property type="protein sequence ID" value="AAO69288.1"/>
    <property type="molecule type" value="Genomic_DNA"/>
</dbReference>
<dbReference type="RefSeq" id="NP_455749.1">
    <property type="nucleotide sequence ID" value="NC_003198.1"/>
</dbReference>
<dbReference type="RefSeq" id="WP_001287383.1">
    <property type="nucleotide sequence ID" value="NZ_WSUR01000006.1"/>
</dbReference>
<dbReference type="BMRB" id="P0A1S3"/>
<dbReference type="SMR" id="P0A1S3"/>
<dbReference type="STRING" id="220341.gene:17585262"/>
<dbReference type="GeneID" id="66756227"/>
<dbReference type="KEGG" id="stt:t1662"/>
<dbReference type="KEGG" id="sty:STY1299"/>
<dbReference type="PATRIC" id="fig|220341.7.peg.1306"/>
<dbReference type="eggNOG" id="COG2916">
    <property type="taxonomic scope" value="Bacteria"/>
</dbReference>
<dbReference type="HOGENOM" id="CLU_117503_0_0_6"/>
<dbReference type="OMA" id="NGVEKTW"/>
<dbReference type="OrthoDB" id="6088948at2"/>
<dbReference type="Proteomes" id="UP000000541">
    <property type="component" value="Chromosome"/>
</dbReference>
<dbReference type="Proteomes" id="UP000002670">
    <property type="component" value="Chromosome"/>
</dbReference>
<dbReference type="GO" id="GO:0005829">
    <property type="term" value="C:cytosol"/>
    <property type="evidence" value="ECO:0007669"/>
    <property type="project" value="TreeGrafter"/>
</dbReference>
<dbReference type="GO" id="GO:0009295">
    <property type="term" value="C:nucleoid"/>
    <property type="evidence" value="ECO:0007669"/>
    <property type="project" value="UniProtKB-SubCell"/>
</dbReference>
<dbReference type="GO" id="GO:0032993">
    <property type="term" value="C:protein-DNA complex"/>
    <property type="evidence" value="ECO:0007669"/>
    <property type="project" value="TreeGrafter"/>
</dbReference>
<dbReference type="GO" id="GO:0003681">
    <property type="term" value="F:bent DNA binding"/>
    <property type="evidence" value="ECO:0007669"/>
    <property type="project" value="TreeGrafter"/>
</dbReference>
<dbReference type="GO" id="GO:0001217">
    <property type="term" value="F:DNA-binding transcription repressor activity"/>
    <property type="evidence" value="ECO:0007669"/>
    <property type="project" value="TreeGrafter"/>
</dbReference>
<dbReference type="GO" id="GO:0003680">
    <property type="term" value="F:minor groove of adenine-thymine-rich DNA binding"/>
    <property type="evidence" value="ECO:0007669"/>
    <property type="project" value="TreeGrafter"/>
</dbReference>
<dbReference type="GO" id="GO:0046983">
    <property type="term" value="F:protein dimerization activity"/>
    <property type="evidence" value="ECO:0007669"/>
    <property type="project" value="InterPro"/>
</dbReference>
<dbReference type="GO" id="GO:0030527">
    <property type="term" value="F:structural constituent of chromatin"/>
    <property type="evidence" value="ECO:0007669"/>
    <property type="project" value="InterPro"/>
</dbReference>
<dbReference type="GO" id="GO:0000976">
    <property type="term" value="F:transcription cis-regulatory region binding"/>
    <property type="evidence" value="ECO:0007669"/>
    <property type="project" value="TreeGrafter"/>
</dbReference>
<dbReference type="FunFam" id="1.10.287.1050:FF:000001">
    <property type="entry name" value="DNA-binding protein"/>
    <property type="match status" value="1"/>
</dbReference>
<dbReference type="FunFam" id="4.10.430.10:FF:000001">
    <property type="entry name" value="DNA-binding protein"/>
    <property type="match status" value="1"/>
</dbReference>
<dbReference type="Gene3D" id="1.10.287.1050">
    <property type="entry name" value="H-NS histone-like proteins"/>
    <property type="match status" value="1"/>
</dbReference>
<dbReference type="Gene3D" id="4.10.430.10">
    <property type="entry name" value="Histone-like protein H-NS, C-terminal domain"/>
    <property type="match status" value="1"/>
</dbReference>
<dbReference type="InterPro" id="IPR054180">
    <property type="entry name" value="H-NS-like_N"/>
</dbReference>
<dbReference type="InterPro" id="IPR027444">
    <property type="entry name" value="H-NS_C_dom"/>
</dbReference>
<dbReference type="InterPro" id="IPR037150">
    <property type="entry name" value="H-NS_C_dom_sf"/>
</dbReference>
<dbReference type="InterPro" id="IPR001801">
    <property type="entry name" value="Histone_HNS"/>
</dbReference>
<dbReference type="InterPro" id="IPR027454">
    <property type="entry name" value="Histone_HNS_N"/>
</dbReference>
<dbReference type="NCBIfam" id="NF008193">
    <property type="entry name" value="PRK10947.1"/>
    <property type="match status" value="1"/>
</dbReference>
<dbReference type="PANTHER" id="PTHR38097">
    <property type="match status" value="1"/>
</dbReference>
<dbReference type="PANTHER" id="PTHR38097:SF1">
    <property type="entry name" value="DNA-BINDING PROTEIN H-NS"/>
    <property type="match status" value="1"/>
</dbReference>
<dbReference type="Pfam" id="PF00816">
    <property type="entry name" value="Histone_HNS"/>
    <property type="match status" value="1"/>
</dbReference>
<dbReference type="Pfam" id="PF22470">
    <property type="entry name" value="Histone_HNS_N"/>
    <property type="match status" value="1"/>
</dbReference>
<dbReference type="PIRSF" id="PIRSF002096">
    <property type="entry name" value="HnS"/>
    <property type="match status" value="1"/>
</dbReference>
<dbReference type="SMART" id="SM00528">
    <property type="entry name" value="HNS"/>
    <property type="match status" value="1"/>
</dbReference>
<dbReference type="SUPFAM" id="SSF81273">
    <property type="entry name" value="H-NS histone-like proteins"/>
    <property type="match status" value="2"/>
</dbReference>
<accession>P0A1S3</accession>
<accession>P17428</accession>